<comment type="function">
    <text evidence="1 3">Involved in the catabolism of short chain fatty acids (SCFA) via the tricarboxylic acid (TCA)(acetyl degradation route) and probably the 2-methylcitrate cycle I (propionate degradation route). Catalyzes the reversible isomerization of citrate to isocitrate via cis-aconitate. Could catalyze the hydration of 2-methyl-cis-aconitate to yield (2R,3S)-2-methylisocitrate. The apo form of AcnA functions as a RNA-binding regulatory protein.</text>
</comment>
<comment type="catalytic activity">
    <reaction evidence="3">
        <text>citrate = D-threo-isocitrate</text>
        <dbReference type="Rhea" id="RHEA:10336"/>
        <dbReference type="ChEBI" id="CHEBI:15562"/>
        <dbReference type="ChEBI" id="CHEBI:16947"/>
        <dbReference type="EC" id="4.2.1.3"/>
    </reaction>
</comment>
<comment type="catalytic activity">
    <reaction evidence="3">
        <text>(2S,3R)-3-hydroxybutane-1,2,3-tricarboxylate = 2-methyl-cis-aconitate + H2O</text>
        <dbReference type="Rhea" id="RHEA:17941"/>
        <dbReference type="ChEBI" id="CHEBI:15377"/>
        <dbReference type="ChEBI" id="CHEBI:57429"/>
        <dbReference type="ChEBI" id="CHEBI:57872"/>
        <dbReference type="EC" id="4.2.1.99"/>
    </reaction>
</comment>
<comment type="cofactor">
    <cofactor evidence="1">
        <name>[4Fe-4S] cluster</name>
        <dbReference type="ChEBI" id="CHEBI:49883"/>
    </cofactor>
    <text evidence="1">Binds 1 [4Fe-4S] cluster per subunit.</text>
</comment>
<comment type="pathway">
    <text evidence="3">Carbohydrate metabolism; tricarboxylic acid cycle; isocitrate from oxaloacetate: step 2/2.</text>
</comment>
<comment type="pathway">
    <text evidence="3">Organic acid metabolism; propanoate degradation.</text>
</comment>
<comment type="subunit">
    <text evidence="1">Monomer.</text>
</comment>
<comment type="similarity">
    <text evidence="4">Belongs to the aconitase/IPM isomerase family.</text>
</comment>
<reference key="1">
    <citation type="journal article" date="2002" name="Proc. Natl. Acad. Sci. U.S.A.">
        <title>Genome sequence of Streptococcus mutans UA159, a cariogenic dental pathogen.</title>
        <authorList>
            <person name="Ajdic D.J."/>
            <person name="McShan W.M."/>
            <person name="McLaughlin R.E."/>
            <person name="Savic G."/>
            <person name="Chang J."/>
            <person name="Carson M.B."/>
            <person name="Primeaux C."/>
            <person name="Tian R."/>
            <person name="Kenton S."/>
            <person name="Jia H.G."/>
            <person name="Lin S.P."/>
            <person name="Qian Y."/>
            <person name="Li S."/>
            <person name="Zhu H."/>
            <person name="Najar F.Z."/>
            <person name="Lai H."/>
            <person name="White J."/>
            <person name="Roe B.A."/>
            <person name="Ferretti J.J."/>
        </authorList>
    </citation>
    <scope>NUCLEOTIDE SEQUENCE [LARGE SCALE GENOMIC DNA]</scope>
    <source>
        <strain>ATCC 700610 / UA159</strain>
    </source>
</reference>
<reference key="2">
    <citation type="journal article" date="1997" name="J. Bacteriol.">
        <title>Role of the citrate pathway in glutamate biosynthesis by Streptococcus mutans.</title>
        <authorList>
            <person name="Cvitkovitch D.G."/>
            <person name="Gutierrez J.A."/>
            <person name="Bleiweis A.S."/>
        </authorList>
    </citation>
    <scope>NUCLEOTIDE SEQUENCE [GENOMIC DNA] OF 626-888</scope>
    <source>
        <strain>JH1005</strain>
    </source>
</reference>
<dbReference type="EC" id="4.2.1.3" evidence="3"/>
<dbReference type="EC" id="4.2.1.99" evidence="3"/>
<dbReference type="EMBL" id="AE014133">
    <property type="protein sequence ID" value="AAN58404.1"/>
    <property type="molecule type" value="Genomic_DNA"/>
</dbReference>
<dbReference type="EMBL" id="U62799">
    <property type="protein sequence ID" value="AAC44824.1"/>
    <property type="molecule type" value="Genomic_DNA"/>
</dbReference>
<dbReference type="RefSeq" id="NP_721098.1">
    <property type="nucleotide sequence ID" value="NC_004350.2"/>
</dbReference>
<dbReference type="SMR" id="Q59938"/>
<dbReference type="STRING" id="210007.SMU_670"/>
<dbReference type="KEGG" id="smu:SMU_670"/>
<dbReference type="PATRIC" id="fig|210007.7.peg.595"/>
<dbReference type="eggNOG" id="COG1048">
    <property type="taxonomic scope" value="Bacteria"/>
</dbReference>
<dbReference type="HOGENOM" id="CLU_013476_2_1_9"/>
<dbReference type="OrthoDB" id="9764318at2"/>
<dbReference type="PhylomeDB" id="Q59938"/>
<dbReference type="UniPathway" id="UPA00223">
    <property type="reaction ID" value="UER00718"/>
</dbReference>
<dbReference type="UniPathway" id="UPA00946"/>
<dbReference type="Proteomes" id="UP000002512">
    <property type="component" value="Chromosome"/>
</dbReference>
<dbReference type="GO" id="GO:0047456">
    <property type="term" value="F:2-methylisocitrate dehydratase activity"/>
    <property type="evidence" value="ECO:0000250"/>
    <property type="project" value="UniProtKB"/>
</dbReference>
<dbReference type="GO" id="GO:0051539">
    <property type="term" value="F:4 iron, 4 sulfur cluster binding"/>
    <property type="evidence" value="ECO:0000250"/>
    <property type="project" value="UniProtKB"/>
</dbReference>
<dbReference type="GO" id="GO:0003994">
    <property type="term" value="F:aconitate hydratase activity"/>
    <property type="evidence" value="ECO:0000250"/>
    <property type="project" value="UniProtKB"/>
</dbReference>
<dbReference type="GO" id="GO:0046872">
    <property type="term" value="F:metal ion binding"/>
    <property type="evidence" value="ECO:0007669"/>
    <property type="project" value="UniProtKB-KW"/>
</dbReference>
<dbReference type="GO" id="GO:0003730">
    <property type="term" value="F:mRNA 3'-UTR binding"/>
    <property type="evidence" value="ECO:0000250"/>
    <property type="project" value="UniProtKB"/>
</dbReference>
<dbReference type="GO" id="GO:0003729">
    <property type="term" value="F:mRNA binding"/>
    <property type="evidence" value="ECO:0000250"/>
    <property type="project" value="UniProtKB"/>
</dbReference>
<dbReference type="GO" id="GO:0019679">
    <property type="term" value="P:propionate metabolic process, methylcitrate cycle"/>
    <property type="evidence" value="ECO:0000250"/>
    <property type="project" value="UniProtKB"/>
</dbReference>
<dbReference type="GO" id="GO:0006099">
    <property type="term" value="P:tricarboxylic acid cycle"/>
    <property type="evidence" value="ECO:0000250"/>
    <property type="project" value="UniProtKB"/>
</dbReference>
<dbReference type="CDD" id="cd01586">
    <property type="entry name" value="AcnA_IRP"/>
    <property type="match status" value="1"/>
</dbReference>
<dbReference type="CDD" id="cd01580">
    <property type="entry name" value="AcnA_IRP_Swivel"/>
    <property type="match status" value="1"/>
</dbReference>
<dbReference type="FunFam" id="3.20.19.10:FF:000001">
    <property type="entry name" value="Aconitate hydratase"/>
    <property type="match status" value="1"/>
</dbReference>
<dbReference type="FunFam" id="3.30.499.10:FF:000002">
    <property type="entry name" value="Aconitate hydratase"/>
    <property type="match status" value="1"/>
</dbReference>
<dbReference type="FunFam" id="3.30.499.10:FF:000005">
    <property type="entry name" value="cytoplasmic aconitate hydratase"/>
    <property type="match status" value="1"/>
</dbReference>
<dbReference type="Gene3D" id="6.10.190.10">
    <property type="match status" value="1"/>
</dbReference>
<dbReference type="Gene3D" id="3.30.499.10">
    <property type="entry name" value="Aconitase, domain 3"/>
    <property type="match status" value="2"/>
</dbReference>
<dbReference type="Gene3D" id="3.20.19.10">
    <property type="entry name" value="Aconitase, domain 4"/>
    <property type="match status" value="1"/>
</dbReference>
<dbReference type="InterPro" id="IPR044137">
    <property type="entry name" value="AcnA_IRP_Swivel"/>
</dbReference>
<dbReference type="InterPro" id="IPR015931">
    <property type="entry name" value="Acnase/IPM_dHydase_lsu_aba_1/3"/>
</dbReference>
<dbReference type="InterPro" id="IPR001030">
    <property type="entry name" value="Acoase/IPM_deHydtase_lsu_aba"/>
</dbReference>
<dbReference type="InterPro" id="IPR015928">
    <property type="entry name" value="Aconitase/3IPM_dehydase_swvl"/>
</dbReference>
<dbReference type="InterPro" id="IPR006249">
    <property type="entry name" value="Aconitase/IRP2"/>
</dbReference>
<dbReference type="InterPro" id="IPR018136">
    <property type="entry name" value="Aconitase_4Fe-4S_BS"/>
</dbReference>
<dbReference type="InterPro" id="IPR036008">
    <property type="entry name" value="Aconitase_4Fe-4S_dom"/>
</dbReference>
<dbReference type="InterPro" id="IPR000573">
    <property type="entry name" value="AconitaseA/IPMdHydase_ssu_swvl"/>
</dbReference>
<dbReference type="NCBIfam" id="TIGR01341">
    <property type="entry name" value="aconitase_1"/>
    <property type="match status" value="1"/>
</dbReference>
<dbReference type="NCBIfam" id="NF006757">
    <property type="entry name" value="PRK09277.1"/>
    <property type="match status" value="1"/>
</dbReference>
<dbReference type="NCBIfam" id="NF009520">
    <property type="entry name" value="PRK12881.1"/>
    <property type="match status" value="1"/>
</dbReference>
<dbReference type="PANTHER" id="PTHR11670">
    <property type="entry name" value="ACONITASE/IRON-RESPONSIVE ELEMENT FAMILY MEMBER"/>
    <property type="match status" value="1"/>
</dbReference>
<dbReference type="Pfam" id="PF00330">
    <property type="entry name" value="Aconitase"/>
    <property type="match status" value="1"/>
</dbReference>
<dbReference type="Pfam" id="PF00694">
    <property type="entry name" value="Aconitase_C"/>
    <property type="match status" value="1"/>
</dbReference>
<dbReference type="PRINTS" id="PR00415">
    <property type="entry name" value="ACONITASE"/>
</dbReference>
<dbReference type="SUPFAM" id="SSF53732">
    <property type="entry name" value="Aconitase iron-sulfur domain"/>
    <property type="match status" value="1"/>
</dbReference>
<dbReference type="SUPFAM" id="SSF52016">
    <property type="entry name" value="LeuD/IlvD-like"/>
    <property type="match status" value="1"/>
</dbReference>
<dbReference type="PROSITE" id="PS00450">
    <property type="entry name" value="ACONITASE_1"/>
    <property type="match status" value="1"/>
</dbReference>
<dbReference type="PROSITE" id="PS01244">
    <property type="entry name" value="ACONITASE_2"/>
    <property type="match status" value="1"/>
</dbReference>
<protein>
    <recommendedName>
        <fullName evidence="3">Aconitate hydratase A</fullName>
        <shortName evidence="3">ACN</shortName>
        <shortName evidence="3">Aconitase</shortName>
        <ecNumber evidence="3">4.2.1.3</ecNumber>
    </recommendedName>
    <alternativeName>
        <fullName evidence="3">(2R,3S)-2-methylisocitrate dehydratase</fullName>
    </alternativeName>
    <alternativeName>
        <fullName evidence="3">(2S,3R)-3-hydroxybutane-1,2,3-tricarboxylate dehydratase</fullName>
    </alternativeName>
    <alternativeName>
        <fullName evidence="1">Iron-responsive protein-like</fullName>
        <shortName evidence="1">IRP-like</shortName>
    </alternativeName>
    <alternativeName>
        <fullName evidence="3">Probable 2-methyl-cis-aconitate hydratase</fullName>
        <ecNumber evidence="3">4.2.1.99</ecNumber>
    </alternativeName>
    <alternativeName>
        <fullName evidence="1">RNA-binding protein</fullName>
    </alternativeName>
</protein>
<accession>Q59938</accession>
<keyword id="KW-0004">4Fe-4S</keyword>
<keyword id="KW-0408">Iron</keyword>
<keyword id="KW-0411">Iron-sulfur</keyword>
<keyword id="KW-0456">Lyase</keyword>
<keyword id="KW-0479">Metal-binding</keyword>
<keyword id="KW-1185">Reference proteome</keyword>
<keyword id="KW-0694">RNA-binding</keyword>
<keyword id="KW-0816">Tricarboxylic acid cycle</keyword>
<name>ACNA_STRMU</name>
<organism>
    <name type="scientific">Streptococcus mutans serotype c (strain ATCC 700610 / UA159)</name>
    <dbReference type="NCBI Taxonomy" id="210007"/>
    <lineage>
        <taxon>Bacteria</taxon>
        <taxon>Bacillati</taxon>
        <taxon>Bacillota</taxon>
        <taxon>Bacilli</taxon>
        <taxon>Lactobacillales</taxon>
        <taxon>Streptococcaceae</taxon>
        <taxon>Streptococcus</taxon>
    </lineage>
</organism>
<evidence type="ECO:0000250" key="1">
    <source>
        <dbReference type="UniProtKB" id="P09339"/>
    </source>
</evidence>
<evidence type="ECO:0000250" key="2">
    <source>
        <dbReference type="UniProtKB" id="P36683"/>
    </source>
</evidence>
<evidence type="ECO:0000250" key="3">
    <source>
        <dbReference type="UniProtKB" id="Q8ZP52"/>
    </source>
</evidence>
<evidence type="ECO:0000305" key="4"/>
<proteinExistence type="inferred from homology"/>
<sequence>MINYTSTFTLNRQKYHYIDLVKASKDYDIELDSLPYTIKILLESLLRKHDDICVTKNNIETLFHYNSKAPQGEVPFKPSRVILQDFTGVPVVVDLASMRDAVVENGGSPDLINPEIPVDLVIDHSVQVDFFGNQDAFDANIDLEFERNNERYEFLKWAEKTFENYRAVPPATGIIHQVNLEFLSDVIINKDGFLYPDSMFGTDSHTTMINGIGVLGWGVGGIEAEAAMLGEASYFPIPEVIGVRLYGELPKVATATDLALKVTQKLRLENVVGKFVEFFGPGLAGLSLADRATVANMAPEYGATCGYFPIDDETLNYMKLTNRSAEHIALTKEYAKRNHLYHDMTNLPSYTKIVEIDLSAIKPSISGPKRPQDLIELGQAKEEFQASLVRQFGVRGFGLGADELAKKATVHFDDGQELEVKTGHVAIAAITSCTNTSNPYVLLSAGLLAKKAVERGLSVAKTVKTSLAPGSKVVTAYLRKSGLQPYLDKLGFNLVGYGCTTCIGNSGDLVPEVAKAVQEKDLLVSAVLSGNRNFEGRVNPLVKANFLASPPLVVAYALAGTTNIDLTSKPLGYDKNGQAVYLEDIMPAKEEVLSYIEQFVTAELFEEEYGHVFSDSQKWNQIETENSKNYQWNQVSTYIQNPPYFENLTNTENKIDLSALKVLAKFGDSVTTDHISPAGNIARNSPAARYLEENGVTYAEFNSYGSRRGNHEVMMRGTFANIRIKNELADGKIGGYTKYEGEILPIYEAAMNYKKNGVSTIVIAGKDYGMGSSRDWAAKGANLLGVKVVLAESFERIHRSNLVMMGILPLQFLDGQTAESLQLTGYETYTVELPEQPQVHDIVKVKATSKEGTKEFQVLLRFDADADIRYYQNGGILPMVVRKKLNGG</sequence>
<gene>
    <name type="primary">acn</name>
    <name type="synonym">citB</name>
    <name type="ordered locus">SMU_670</name>
</gene>
<feature type="chain" id="PRO_0000076674" description="Aconitate hydratase A">
    <location>
        <begin position="1"/>
        <end position="888"/>
    </location>
</feature>
<feature type="binding site" evidence="2">
    <location>
        <position position="433"/>
    </location>
    <ligand>
        <name>[4Fe-4S] cluster</name>
        <dbReference type="ChEBI" id="CHEBI:49883"/>
    </ligand>
</feature>
<feature type="binding site" evidence="2">
    <location>
        <position position="499"/>
    </location>
    <ligand>
        <name>[4Fe-4S] cluster</name>
        <dbReference type="ChEBI" id="CHEBI:49883"/>
    </ligand>
</feature>
<feature type="binding site" evidence="2">
    <location>
        <position position="502"/>
    </location>
    <ligand>
        <name>[4Fe-4S] cluster</name>
        <dbReference type="ChEBI" id="CHEBI:49883"/>
    </ligand>
</feature>